<proteinExistence type="inferred from homology"/>
<name>RL22_ECO57</name>
<feature type="chain" id="PRO_0000125155" description="Large ribosomal subunit protein uL22">
    <location>
        <begin position="1"/>
        <end position="110"/>
    </location>
</feature>
<dbReference type="EMBL" id="AE005174">
    <property type="protein sequence ID" value="AAG58436.1"/>
    <property type="molecule type" value="Genomic_DNA"/>
</dbReference>
<dbReference type="EMBL" id="BA000007">
    <property type="protein sequence ID" value="BAB37603.1"/>
    <property type="molecule type" value="Genomic_DNA"/>
</dbReference>
<dbReference type="PIR" id="D91151">
    <property type="entry name" value="D91151"/>
</dbReference>
<dbReference type="PIR" id="H85996">
    <property type="entry name" value="H85996"/>
</dbReference>
<dbReference type="RefSeq" id="NP_312207.1">
    <property type="nucleotide sequence ID" value="NC_002695.1"/>
</dbReference>
<dbReference type="RefSeq" id="WP_000447529.1">
    <property type="nucleotide sequence ID" value="NZ_VOAI01000041.1"/>
</dbReference>
<dbReference type="SMR" id="P61177"/>
<dbReference type="STRING" id="155864.Z4686"/>
<dbReference type="DrugBank" id="DB01369">
    <property type="generic name" value="Quinupristin"/>
</dbReference>
<dbReference type="GeneID" id="915968"/>
<dbReference type="GeneID" id="93778672"/>
<dbReference type="KEGG" id="ece:Z4686"/>
<dbReference type="KEGG" id="ecs:ECs_4180"/>
<dbReference type="PATRIC" id="fig|386585.9.peg.4363"/>
<dbReference type="eggNOG" id="COG0091">
    <property type="taxonomic scope" value="Bacteria"/>
</dbReference>
<dbReference type="HOGENOM" id="CLU_083987_3_3_6"/>
<dbReference type="OMA" id="KRIQPRA"/>
<dbReference type="Proteomes" id="UP000000558">
    <property type="component" value="Chromosome"/>
</dbReference>
<dbReference type="Proteomes" id="UP000002519">
    <property type="component" value="Chromosome"/>
</dbReference>
<dbReference type="GO" id="GO:0022625">
    <property type="term" value="C:cytosolic large ribosomal subunit"/>
    <property type="evidence" value="ECO:0007669"/>
    <property type="project" value="TreeGrafter"/>
</dbReference>
<dbReference type="GO" id="GO:0019843">
    <property type="term" value="F:rRNA binding"/>
    <property type="evidence" value="ECO:0007669"/>
    <property type="project" value="UniProtKB-UniRule"/>
</dbReference>
<dbReference type="GO" id="GO:0003735">
    <property type="term" value="F:structural constituent of ribosome"/>
    <property type="evidence" value="ECO:0007669"/>
    <property type="project" value="InterPro"/>
</dbReference>
<dbReference type="GO" id="GO:0006412">
    <property type="term" value="P:translation"/>
    <property type="evidence" value="ECO:0007669"/>
    <property type="project" value="UniProtKB-UniRule"/>
</dbReference>
<dbReference type="CDD" id="cd00336">
    <property type="entry name" value="Ribosomal_L22"/>
    <property type="match status" value="1"/>
</dbReference>
<dbReference type="FunFam" id="3.90.470.10:FF:000001">
    <property type="entry name" value="50S ribosomal protein L22"/>
    <property type="match status" value="1"/>
</dbReference>
<dbReference type="Gene3D" id="3.90.470.10">
    <property type="entry name" value="Ribosomal protein L22/L17"/>
    <property type="match status" value="1"/>
</dbReference>
<dbReference type="HAMAP" id="MF_01331_B">
    <property type="entry name" value="Ribosomal_uL22_B"/>
    <property type="match status" value="1"/>
</dbReference>
<dbReference type="InterPro" id="IPR001063">
    <property type="entry name" value="Ribosomal_uL22"/>
</dbReference>
<dbReference type="InterPro" id="IPR005727">
    <property type="entry name" value="Ribosomal_uL22_bac/chlpt-type"/>
</dbReference>
<dbReference type="InterPro" id="IPR047867">
    <property type="entry name" value="Ribosomal_uL22_bac/org-type"/>
</dbReference>
<dbReference type="InterPro" id="IPR018260">
    <property type="entry name" value="Ribosomal_uL22_CS"/>
</dbReference>
<dbReference type="InterPro" id="IPR036394">
    <property type="entry name" value="Ribosomal_uL22_sf"/>
</dbReference>
<dbReference type="NCBIfam" id="TIGR01044">
    <property type="entry name" value="rplV_bact"/>
    <property type="match status" value="1"/>
</dbReference>
<dbReference type="PANTHER" id="PTHR13501">
    <property type="entry name" value="CHLOROPLAST 50S RIBOSOMAL PROTEIN L22-RELATED"/>
    <property type="match status" value="1"/>
</dbReference>
<dbReference type="PANTHER" id="PTHR13501:SF8">
    <property type="entry name" value="LARGE RIBOSOMAL SUBUNIT PROTEIN UL22M"/>
    <property type="match status" value="1"/>
</dbReference>
<dbReference type="Pfam" id="PF00237">
    <property type="entry name" value="Ribosomal_L22"/>
    <property type="match status" value="1"/>
</dbReference>
<dbReference type="SUPFAM" id="SSF54843">
    <property type="entry name" value="Ribosomal protein L22"/>
    <property type="match status" value="1"/>
</dbReference>
<dbReference type="PROSITE" id="PS00464">
    <property type="entry name" value="RIBOSOMAL_L22"/>
    <property type="match status" value="1"/>
</dbReference>
<gene>
    <name evidence="1" type="primary">rplV</name>
    <name type="ordered locus">Z4686</name>
    <name type="ordered locus">ECs4180</name>
</gene>
<comment type="function">
    <text evidence="1">This protein binds specifically to 23S rRNA; its binding is stimulated by other ribosomal proteins, e.g. L4, L17, and L20. It is important during the early stages of 50S assembly. It makes multiple contacts with different domains of the 23S rRNA in the assembled 50S subunit and ribosome (By similarity).</text>
</comment>
<comment type="function">
    <text evidence="1">The globular domain of the protein is located near the polypeptide exit tunnel on the outside of the subunit, while an extended beta-hairpin is found that lines the wall of the exit tunnel in the center of the 70S ribosome.</text>
</comment>
<comment type="subunit">
    <text evidence="1">Part of the 50S ribosomal subunit.</text>
</comment>
<comment type="similarity">
    <text evidence="1">Belongs to the universal ribosomal protein uL22 family.</text>
</comment>
<reference key="1">
    <citation type="journal article" date="2001" name="Nature">
        <title>Genome sequence of enterohaemorrhagic Escherichia coli O157:H7.</title>
        <authorList>
            <person name="Perna N.T."/>
            <person name="Plunkett G. III"/>
            <person name="Burland V."/>
            <person name="Mau B."/>
            <person name="Glasner J.D."/>
            <person name="Rose D.J."/>
            <person name="Mayhew G.F."/>
            <person name="Evans P.S."/>
            <person name="Gregor J."/>
            <person name="Kirkpatrick H.A."/>
            <person name="Posfai G."/>
            <person name="Hackett J."/>
            <person name="Klink S."/>
            <person name="Boutin A."/>
            <person name="Shao Y."/>
            <person name="Miller L."/>
            <person name="Grotbeck E.J."/>
            <person name="Davis N.W."/>
            <person name="Lim A."/>
            <person name="Dimalanta E.T."/>
            <person name="Potamousis K."/>
            <person name="Apodaca J."/>
            <person name="Anantharaman T.S."/>
            <person name="Lin J."/>
            <person name="Yen G."/>
            <person name="Schwartz D.C."/>
            <person name="Welch R.A."/>
            <person name="Blattner F.R."/>
        </authorList>
    </citation>
    <scope>NUCLEOTIDE SEQUENCE [LARGE SCALE GENOMIC DNA]</scope>
    <source>
        <strain>O157:H7 / EDL933 / ATCC 700927 / EHEC</strain>
    </source>
</reference>
<reference key="2">
    <citation type="journal article" date="2001" name="DNA Res.">
        <title>Complete genome sequence of enterohemorrhagic Escherichia coli O157:H7 and genomic comparison with a laboratory strain K-12.</title>
        <authorList>
            <person name="Hayashi T."/>
            <person name="Makino K."/>
            <person name="Ohnishi M."/>
            <person name="Kurokawa K."/>
            <person name="Ishii K."/>
            <person name="Yokoyama K."/>
            <person name="Han C.-G."/>
            <person name="Ohtsubo E."/>
            <person name="Nakayama K."/>
            <person name="Murata T."/>
            <person name="Tanaka M."/>
            <person name="Tobe T."/>
            <person name="Iida T."/>
            <person name="Takami H."/>
            <person name="Honda T."/>
            <person name="Sasakawa C."/>
            <person name="Ogasawara N."/>
            <person name="Yasunaga T."/>
            <person name="Kuhara S."/>
            <person name="Shiba T."/>
            <person name="Hattori M."/>
            <person name="Shinagawa H."/>
        </authorList>
    </citation>
    <scope>NUCLEOTIDE SEQUENCE [LARGE SCALE GENOMIC DNA]</scope>
    <source>
        <strain>O157:H7 / Sakai / RIMD 0509952 / EHEC</strain>
    </source>
</reference>
<protein>
    <recommendedName>
        <fullName evidence="1">Large ribosomal subunit protein uL22</fullName>
    </recommendedName>
    <alternativeName>
        <fullName evidence="2">50S ribosomal protein L22</fullName>
    </alternativeName>
</protein>
<accession>P61177</accession>
<accession>P02423</accession>
<sequence>METIAKHRHARSSAQKVRLVADLIRGKKVSQALDILTYTNKKAAVLVKKVLESAIANAEHNDGADIDDLKVTKIFVDEGPSMKRIMPRAKGRADRILKRTSHITVVVSDR</sequence>
<organism>
    <name type="scientific">Escherichia coli O157:H7</name>
    <dbReference type="NCBI Taxonomy" id="83334"/>
    <lineage>
        <taxon>Bacteria</taxon>
        <taxon>Pseudomonadati</taxon>
        <taxon>Pseudomonadota</taxon>
        <taxon>Gammaproteobacteria</taxon>
        <taxon>Enterobacterales</taxon>
        <taxon>Enterobacteriaceae</taxon>
        <taxon>Escherichia</taxon>
    </lineage>
</organism>
<keyword id="KW-1185">Reference proteome</keyword>
<keyword id="KW-0687">Ribonucleoprotein</keyword>
<keyword id="KW-0689">Ribosomal protein</keyword>
<keyword id="KW-0694">RNA-binding</keyword>
<keyword id="KW-0699">rRNA-binding</keyword>
<evidence type="ECO:0000255" key="1">
    <source>
        <dbReference type="HAMAP-Rule" id="MF_01331"/>
    </source>
</evidence>
<evidence type="ECO:0000305" key="2"/>